<reference key="1">
    <citation type="journal article" date="2006" name="Proc. Natl. Acad. Sci. U.S.A.">
        <title>Comparative genomics of the lactic acid bacteria.</title>
        <authorList>
            <person name="Makarova K.S."/>
            <person name="Slesarev A."/>
            <person name="Wolf Y.I."/>
            <person name="Sorokin A."/>
            <person name="Mirkin B."/>
            <person name="Koonin E.V."/>
            <person name="Pavlov A."/>
            <person name="Pavlova N."/>
            <person name="Karamychev V."/>
            <person name="Polouchine N."/>
            <person name="Shakhova V."/>
            <person name="Grigoriev I."/>
            <person name="Lou Y."/>
            <person name="Rohksar D."/>
            <person name="Lucas S."/>
            <person name="Huang K."/>
            <person name="Goodstein D.M."/>
            <person name="Hawkins T."/>
            <person name="Plengvidhya V."/>
            <person name="Welker D."/>
            <person name="Hughes J."/>
            <person name="Goh Y."/>
            <person name="Benson A."/>
            <person name="Baldwin K."/>
            <person name="Lee J.-H."/>
            <person name="Diaz-Muniz I."/>
            <person name="Dosti B."/>
            <person name="Smeianov V."/>
            <person name="Wechter W."/>
            <person name="Barabote R."/>
            <person name="Lorca G."/>
            <person name="Altermann E."/>
            <person name="Barrangou R."/>
            <person name="Ganesan B."/>
            <person name="Xie Y."/>
            <person name="Rawsthorne H."/>
            <person name="Tamir D."/>
            <person name="Parker C."/>
            <person name="Breidt F."/>
            <person name="Broadbent J.R."/>
            <person name="Hutkins R."/>
            <person name="O'Sullivan D."/>
            <person name="Steele J."/>
            <person name="Unlu G."/>
            <person name="Saier M.H. Jr."/>
            <person name="Klaenhammer T."/>
            <person name="Richardson P."/>
            <person name="Kozyavkin S."/>
            <person name="Weimer B.C."/>
            <person name="Mills D.A."/>
        </authorList>
    </citation>
    <scope>NUCLEOTIDE SEQUENCE [LARGE SCALE GENOMIC DNA]</scope>
    <source>
        <strain>ATCC 367 / BCRC 12310 / CIP 105137 / JCM 1170 / LMG 11437 / NCIMB 947 / NCTC 947</strain>
    </source>
</reference>
<protein>
    <recommendedName>
        <fullName evidence="1">UPF0473 protein LVIS_1220</fullName>
    </recommendedName>
</protein>
<name>Y1220_LEVBA</name>
<comment type="similarity">
    <text evidence="1">Belongs to the UPF0473 family.</text>
</comment>
<dbReference type="EMBL" id="CP000416">
    <property type="protein sequence ID" value="ABJ64326.1"/>
    <property type="molecule type" value="Genomic_DNA"/>
</dbReference>
<dbReference type="RefSeq" id="WP_011667956.1">
    <property type="nucleotide sequence ID" value="NC_008497.1"/>
</dbReference>
<dbReference type="STRING" id="387344.LVIS_1220"/>
<dbReference type="KEGG" id="lbr:LVIS_1220"/>
<dbReference type="eggNOG" id="COG3906">
    <property type="taxonomic scope" value="Bacteria"/>
</dbReference>
<dbReference type="HOGENOM" id="CLU_146610_2_1_9"/>
<dbReference type="Proteomes" id="UP000001652">
    <property type="component" value="Chromosome"/>
</dbReference>
<dbReference type="HAMAP" id="MF_01448">
    <property type="entry name" value="UPF0473"/>
    <property type="match status" value="1"/>
</dbReference>
<dbReference type="InterPro" id="IPR009711">
    <property type="entry name" value="UPF0473"/>
</dbReference>
<dbReference type="NCBIfam" id="NF010217">
    <property type="entry name" value="PRK13678.1-4"/>
    <property type="match status" value="1"/>
</dbReference>
<dbReference type="PANTHER" id="PTHR40066">
    <property type="entry name" value="UPF0473 PROTEIN CBO2561/CLC_2432"/>
    <property type="match status" value="1"/>
</dbReference>
<dbReference type="PANTHER" id="PTHR40066:SF1">
    <property type="entry name" value="UPF0473 PROTEIN CBO2561_CLC_2432"/>
    <property type="match status" value="1"/>
</dbReference>
<dbReference type="Pfam" id="PF06949">
    <property type="entry name" value="DUF1292"/>
    <property type="match status" value="1"/>
</dbReference>
<proteinExistence type="inferred from homology"/>
<accession>Q03R46</accession>
<sequence length="103" mass="11385">MNEDQEQITLVDENGNEELYDVLFTFESDDFGKSYILIYPAGKSDDEEVDIQAYALPADDDPANPSGGDLQLIESDEEWDMVESVLNTFLADGTIDPNAGSKD</sequence>
<gene>
    <name type="ordered locus">LVIS_1220</name>
</gene>
<organism>
    <name type="scientific">Levilactobacillus brevis (strain ATCC 367 / BCRC 12310 / CIP 105137 / JCM 1170 / LMG 11437 / NCIMB 947 / NCTC 947)</name>
    <name type="common">Lactobacillus brevis</name>
    <dbReference type="NCBI Taxonomy" id="387344"/>
    <lineage>
        <taxon>Bacteria</taxon>
        <taxon>Bacillati</taxon>
        <taxon>Bacillota</taxon>
        <taxon>Bacilli</taxon>
        <taxon>Lactobacillales</taxon>
        <taxon>Lactobacillaceae</taxon>
        <taxon>Levilactobacillus</taxon>
    </lineage>
</organism>
<feature type="chain" id="PRO_0000304833" description="UPF0473 protein LVIS_1220">
    <location>
        <begin position="1"/>
        <end position="103"/>
    </location>
</feature>
<keyword id="KW-1185">Reference proteome</keyword>
<evidence type="ECO:0000255" key="1">
    <source>
        <dbReference type="HAMAP-Rule" id="MF_01448"/>
    </source>
</evidence>